<reference key="1">
    <citation type="journal article" date="1993" name="Mol. Microbiol.">
        <title>Mode and origin of replication of pSAM2, a conjugative integrating element of Streptomyces ambofaciens.</title>
        <authorList>
            <person name="Hagege J."/>
            <person name="Pernodet J.L."/>
            <person name="Friedmann A."/>
            <person name="Guerineau M."/>
        </authorList>
    </citation>
    <scope>NUCLEOTIDE SEQUENCE [GENOMIC DNA]</scope>
    <source>
        <strain>ATCC 23877 / 3486 / DSM 40053 / JCM 4204 / NBRC 12836 / NRRL B-2516</strain>
    </source>
</reference>
<geneLocation type="plasmid">
    <name>pSAM2</name>
</geneLocation>
<protein>
    <recommendedName>
        <fullName>MutT-like protein</fullName>
    </recommendedName>
    <alternativeName>
        <fullName>ORF154</fullName>
    </alternativeName>
</protein>
<keyword id="KW-0378">Hydrolase</keyword>
<keyword id="KW-0460">Magnesium</keyword>
<keyword id="KW-0479">Metal-binding</keyword>
<keyword id="KW-0614">Plasmid</keyword>
<organism>
    <name type="scientific">Streptomyces ambofaciens</name>
    <dbReference type="NCBI Taxonomy" id="1889"/>
    <lineage>
        <taxon>Bacteria</taxon>
        <taxon>Bacillati</taxon>
        <taxon>Actinomycetota</taxon>
        <taxon>Actinomycetes</taxon>
        <taxon>Kitasatosporales</taxon>
        <taxon>Streptomycetaceae</taxon>
        <taxon>Streptomyces</taxon>
    </lineage>
</organism>
<comment type="similarity">
    <text evidence="3">Belongs to the Nudix hydrolase family.</text>
</comment>
<proteinExistence type="inferred from homology"/>
<evidence type="ECO:0000250" key="1"/>
<evidence type="ECO:0000255" key="2">
    <source>
        <dbReference type="PROSITE-ProRule" id="PRU00794"/>
    </source>
</evidence>
<evidence type="ECO:0000305" key="3"/>
<dbReference type="EMBL" id="Z19590">
    <property type="protein sequence ID" value="CAA79638.1"/>
    <property type="molecule type" value="Genomic_DNA"/>
</dbReference>
<dbReference type="PIR" id="S39873">
    <property type="entry name" value="S39873"/>
</dbReference>
<dbReference type="SMR" id="P32091"/>
<dbReference type="GO" id="GO:0016787">
    <property type="term" value="F:hydrolase activity"/>
    <property type="evidence" value="ECO:0007669"/>
    <property type="project" value="UniProtKB-KW"/>
</dbReference>
<dbReference type="GO" id="GO:0046872">
    <property type="term" value="F:metal ion binding"/>
    <property type="evidence" value="ECO:0007669"/>
    <property type="project" value="UniProtKB-KW"/>
</dbReference>
<dbReference type="Gene3D" id="3.90.79.10">
    <property type="entry name" value="Nucleoside Triphosphate Pyrophosphohydrolase"/>
    <property type="match status" value="1"/>
</dbReference>
<dbReference type="InterPro" id="IPR020476">
    <property type="entry name" value="Nudix_hydrolase"/>
</dbReference>
<dbReference type="InterPro" id="IPR015797">
    <property type="entry name" value="NUDIX_hydrolase-like_dom_sf"/>
</dbReference>
<dbReference type="InterPro" id="IPR020084">
    <property type="entry name" value="NUDIX_hydrolase_CS"/>
</dbReference>
<dbReference type="InterPro" id="IPR000086">
    <property type="entry name" value="NUDIX_hydrolase_dom"/>
</dbReference>
<dbReference type="PANTHER" id="PTHR43736">
    <property type="entry name" value="ADP-RIBOSE PYROPHOSPHATASE"/>
    <property type="match status" value="1"/>
</dbReference>
<dbReference type="PANTHER" id="PTHR43736:SF1">
    <property type="entry name" value="DIHYDRONEOPTERIN TRIPHOSPHATE DIPHOSPHATASE"/>
    <property type="match status" value="1"/>
</dbReference>
<dbReference type="Pfam" id="PF00293">
    <property type="entry name" value="NUDIX"/>
    <property type="match status" value="1"/>
</dbReference>
<dbReference type="PRINTS" id="PR00502">
    <property type="entry name" value="NUDIXFAMILY"/>
</dbReference>
<dbReference type="SUPFAM" id="SSF55811">
    <property type="entry name" value="Nudix"/>
    <property type="match status" value="1"/>
</dbReference>
<dbReference type="PROSITE" id="PS51462">
    <property type="entry name" value="NUDIX"/>
    <property type="match status" value="1"/>
</dbReference>
<dbReference type="PROSITE" id="PS00893">
    <property type="entry name" value="NUDIX_BOX"/>
    <property type="match status" value="1"/>
</dbReference>
<sequence>MLLYMSQPQEATSPPLHSVSVAGVVVREDGRLLAIRRADNGTWELPGGVLELDETPETGVAREVWEETGIRVEVDELTGVYKNTTRGIVALVFRCKPSGGVERTSSESTAVSWLTPDEVSERMAEVYAIRLLDALDGAGPHVRSHDGKHLIPAG</sequence>
<feature type="chain" id="PRO_0000056951" description="MutT-like protein">
    <location>
        <begin position="1"/>
        <end position="154"/>
    </location>
</feature>
<feature type="domain" description="Nudix hydrolase" evidence="2">
    <location>
        <begin position="15"/>
        <end position="136"/>
    </location>
</feature>
<feature type="short sequence motif" description="Nudix box">
    <location>
        <begin position="48"/>
        <end position="69"/>
    </location>
</feature>
<feature type="binding site" evidence="1">
    <location>
        <position position="48"/>
    </location>
    <ligand>
        <name>Mg(2+)</name>
        <dbReference type="ChEBI" id="CHEBI:18420"/>
    </ligand>
</feature>
<feature type="binding site" evidence="1">
    <location>
        <position position="63"/>
    </location>
    <ligand>
        <name>Mg(2+)</name>
        <dbReference type="ChEBI" id="CHEBI:18420"/>
    </ligand>
</feature>
<feature type="binding site" evidence="1">
    <location>
        <position position="66"/>
    </location>
    <ligand>
        <name>Mg(2+)</name>
        <dbReference type="ChEBI" id="CHEBI:18420"/>
    </ligand>
</feature>
<feature type="binding site" evidence="1">
    <location>
        <position position="67"/>
    </location>
    <ligand>
        <name>Mg(2+)</name>
        <dbReference type="ChEBI" id="CHEBI:18420"/>
    </ligand>
</feature>
<accession>P32091</accession>
<name>MUTT_STRAM</name>